<name>GBLP_CAEEL</name>
<sequence length="325" mass="35830">MVQEQMKLTGTLEGHTGWVTQIATYTRNDKTTVLSSSRDKTILVWDVDSVAPVDEGPIGRPVRSLTGHNHFVSDVVISSDGQFALSGSWDKTLRLWDLNQGVSTRQFISHTKDVLSVAFSADNRQIVSGSRDKSIKLWNTLAQCKYTITDDCHTDWVSTVRFSPSNRDPVIVSAGWDKVVKVWNLGNCRLKTNHIGHTGYVNTVTVSPDGSLCASGGKDGQAMLWDLNEGKHLYTLPGNDVINAMSFSPNRYWLCAAVGSSIKIWDLEDKKEIEELKPEIASSGSSRGSSPQCISLAWSQDGQTLFAGYTDNIIRVYQVSIRASN</sequence>
<dbReference type="EMBL" id="Z69664">
    <property type="protein sequence ID" value="CAA93514.1"/>
    <property type="molecule type" value="Genomic_DNA"/>
</dbReference>
<dbReference type="PIR" id="T23309">
    <property type="entry name" value="T23309"/>
</dbReference>
<dbReference type="RefSeq" id="NP_501859.1">
    <property type="nucleotide sequence ID" value="NM_069458.7"/>
</dbReference>
<dbReference type="SMR" id="Q21215"/>
<dbReference type="BioGRID" id="42997">
    <property type="interactions" value="64"/>
</dbReference>
<dbReference type="DIP" id="DIP-26516N"/>
<dbReference type="FunCoup" id="Q21215">
    <property type="interactions" value="2315"/>
</dbReference>
<dbReference type="IntAct" id="Q21215">
    <property type="interactions" value="6"/>
</dbReference>
<dbReference type="MINT" id="Q21215"/>
<dbReference type="STRING" id="6239.K04D7.1.3"/>
<dbReference type="iPTMnet" id="Q21215"/>
<dbReference type="PaxDb" id="6239-K04D7.1.3"/>
<dbReference type="PeptideAtlas" id="Q21215"/>
<dbReference type="EnsemblMetazoa" id="K04D7.1.1">
    <property type="protein sequence ID" value="K04D7.1.1"/>
    <property type="gene ID" value="WBGene00010556"/>
</dbReference>
<dbReference type="EnsemblMetazoa" id="K04D7.1.2">
    <property type="protein sequence ID" value="K04D7.1.2"/>
    <property type="gene ID" value="WBGene00010556"/>
</dbReference>
<dbReference type="EnsemblMetazoa" id="K04D7.1.3">
    <property type="protein sequence ID" value="K04D7.1.3"/>
    <property type="gene ID" value="WBGene00010556"/>
</dbReference>
<dbReference type="GeneID" id="177895"/>
<dbReference type="KEGG" id="cel:CELE_K04D7.1"/>
<dbReference type="UCSC" id="K04D7.1.1">
    <property type="organism name" value="c. elegans"/>
</dbReference>
<dbReference type="AGR" id="WB:WBGene00010556"/>
<dbReference type="CTD" id="177895"/>
<dbReference type="WormBase" id="K04D7.1">
    <property type="protein sequence ID" value="CE06090"/>
    <property type="gene ID" value="WBGene00010556"/>
    <property type="gene designation" value="rack-1"/>
</dbReference>
<dbReference type="eggNOG" id="KOG0279">
    <property type="taxonomic scope" value="Eukaryota"/>
</dbReference>
<dbReference type="GeneTree" id="ENSGT00940000154461"/>
<dbReference type="HOGENOM" id="CLU_000288_57_7_1"/>
<dbReference type="InParanoid" id="Q21215"/>
<dbReference type="OMA" id="NCKLKIN"/>
<dbReference type="OrthoDB" id="7875889at2759"/>
<dbReference type="PhylomeDB" id="Q21215"/>
<dbReference type="SignaLink" id="Q21215"/>
<dbReference type="CD-CODE" id="1E117272">
    <property type="entry name" value="Centrosome"/>
</dbReference>
<dbReference type="PRO" id="PR:Q21215"/>
<dbReference type="Proteomes" id="UP000001940">
    <property type="component" value="Chromosome IV"/>
</dbReference>
<dbReference type="Bgee" id="WBGene00010556">
    <property type="expression patterns" value="Expressed in larva and 4 other cell types or tissues"/>
</dbReference>
<dbReference type="GO" id="GO:0030424">
    <property type="term" value="C:axon"/>
    <property type="evidence" value="ECO:0000314"/>
    <property type="project" value="WormBase"/>
</dbReference>
<dbReference type="GO" id="GO:0044297">
    <property type="term" value="C:cell body"/>
    <property type="evidence" value="ECO:0000314"/>
    <property type="project" value="WormBase"/>
</dbReference>
<dbReference type="GO" id="GO:0005813">
    <property type="term" value="C:centrosome"/>
    <property type="evidence" value="ECO:0000314"/>
    <property type="project" value="WormBase"/>
</dbReference>
<dbReference type="GO" id="GO:0005737">
    <property type="term" value="C:cytoplasm"/>
    <property type="evidence" value="ECO:0000314"/>
    <property type="project" value="WormBase"/>
</dbReference>
<dbReference type="GO" id="GO:0005829">
    <property type="term" value="C:cytosol"/>
    <property type="evidence" value="ECO:0000318"/>
    <property type="project" value="GO_Central"/>
</dbReference>
<dbReference type="GO" id="GO:0030426">
    <property type="term" value="C:growth cone"/>
    <property type="evidence" value="ECO:0000314"/>
    <property type="project" value="WormBase"/>
</dbReference>
<dbReference type="GO" id="GO:0000776">
    <property type="term" value="C:kinetochore"/>
    <property type="evidence" value="ECO:0000314"/>
    <property type="project" value="WormBase"/>
</dbReference>
<dbReference type="GO" id="GO:0005635">
    <property type="term" value="C:nuclear envelope"/>
    <property type="evidence" value="ECO:0000314"/>
    <property type="project" value="WormBase"/>
</dbReference>
<dbReference type="GO" id="GO:0005634">
    <property type="term" value="C:nucleus"/>
    <property type="evidence" value="ECO:0000318"/>
    <property type="project" value="GO_Central"/>
</dbReference>
<dbReference type="GO" id="GO:1990904">
    <property type="term" value="C:ribonucleoprotein complex"/>
    <property type="evidence" value="ECO:0007669"/>
    <property type="project" value="UniProtKB-KW"/>
</dbReference>
<dbReference type="GO" id="GO:0005840">
    <property type="term" value="C:ribosome"/>
    <property type="evidence" value="ECO:0007669"/>
    <property type="project" value="UniProtKB-KW"/>
</dbReference>
<dbReference type="GO" id="GO:0005080">
    <property type="term" value="F:protein kinase C binding"/>
    <property type="evidence" value="ECO:0000318"/>
    <property type="project" value="GO_Central"/>
</dbReference>
<dbReference type="GO" id="GO:0043022">
    <property type="term" value="F:ribosome binding"/>
    <property type="evidence" value="ECO:0000318"/>
    <property type="project" value="GO_Central"/>
</dbReference>
<dbReference type="GO" id="GO:0045182">
    <property type="term" value="F:translation regulator activity"/>
    <property type="evidence" value="ECO:0007669"/>
    <property type="project" value="InterPro"/>
</dbReference>
<dbReference type="GO" id="GO:0061760">
    <property type="term" value="P:antifungal innate immune response"/>
    <property type="evidence" value="ECO:0000315"/>
    <property type="project" value="WormBase"/>
</dbReference>
<dbReference type="GO" id="GO:0051304">
    <property type="term" value="P:chromosome separation"/>
    <property type="evidence" value="ECO:0000315"/>
    <property type="project" value="WormBase"/>
</dbReference>
<dbReference type="GO" id="GO:0050832">
    <property type="term" value="P:defense response to fungus"/>
    <property type="evidence" value="ECO:0000315"/>
    <property type="project" value="WormBase"/>
</dbReference>
<dbReference type="GO" id="GO:0009792">
    <property type="term" value="P:embryo development ending in birth or egg hatching"/>
    <property type="evidence" value="ECO:0000315"/>
    <property type="project" value="WormBase"/>
</dbReference>
<dbReference type="GO" id="GO:0000281">
    <property type="term" value="P:mitotic cytokinesis"/>
    <property type="evidence" value="ECO:0000315"/>
    <property type="project" value="WormBase"/>
</dbReference>
<dbReference type="GO" id="GO:0008045">
    <property type="term" value="P:motor neuron axon guidance"/>
    <property type="evidence" value="ECO:0000315"/>
    <property type="project" value="WormBase"/>
</dbReference>
<dbReference type="GO" id="GO:2001125">
    <property type="term" value="P:negative regulation of translational frameshifting"/>
    <property type="evidence" value="ECO:0000318"/>
    <property type="project" value="GO_Central"/>
</dbReference>
<dbReference type="GO" id="GO:0040038">
    <property type="term" value="P:polar body extrusion after meiotic divisions"/>
    <property type="evidence" value="ECO:0000315"/>
    <property type="project" value="WormBase"/>
</dbReference>
<dbReference type="GO" id="GO:0033365">
    <property type="term" value="P:protein localization to organelle"/>
    <property type="evidence" value="ECO:0000315"/>
    <property type="project" value="WormBase"/>
</dbReference>
<dbReference type="GO" id="GO:0030334">
    <property type="term" value="P:regulation of cell migration"/>
    <property type="evidence" value="ECO:0000315"/>
    <property type="project" value="WormBase"/>
</dbReference>
<dbReference type="GO" id="GO:0072344">
    <property type="term" value="P:rescue of stalled ribosome"/>
    <property type="evidence" value="ECO:0000318"/>
    <property type="project" value="GO_Central"/>
</dbReference>
<dbReference type="CDD" id="cd00200">
    <property type="entry name" value="WD40"/>
    <property type="match status" value="1"/>
</dbReference>
<dbReference type="FunFam" id="2.130.10.10:FF:000018">
    <property type="entry name" value="Receptor for activated C kinase 1"/>
    <property type="match status" value="1"/>
</dbReference>
<dbReference type="Gene3D" id="2.130.10.10">
    <property type="entry name" value="YVTN repeat-like/Quinoprotein amine dehydrogenase"/>
    <property type="match status" value="1"/>
</dbReference>
<dbReference type="InterPro" id="IPR020472">
    <property type="entry name" value="G-protein_beta_WD-40_rep"/>
</dbReference>
<dbReference type="InterPro" id="IPR045223">
    <property type="entry name" value="RACK1-like"/>
</dbReference>
<dbReference type="InterPro" id="IPR015943">
    <property type="entry name" value="WD40/YVTN_repeat-like_dom_sf"/>
</dbReference>
<dbReference type="InterPro" id="IPR019775">
    <property type="entry name" value="WD40_repeat_CS"/>
</dbReference>
<dbReference type="InterPro" id="IPR036322">
    <property type="entry name" value="WD40_repeat_dom_sf"/>
</dbReference>
<dbReference type="InterPro" id="IPR001680">
    <property type="entry name" value="WD40_rpt"/>
</dbReference>
<dbReference type="PANTHER" id="PTHR19868">
    <property type="entry name" value="RECEPTOR FOR ACTIVATED PROTEIN KINASE C RACK1"/>
    <property type="match status" value="1"/>
</dbReference>
<dbReference type="Pfam" id="PF00400">
    <property type="entry name" value="WD40"/>
    <property type="match status" value="7"/>
</dbReference>
<dbReference type="PRINTS" id="PR00320">
    <property type="entry name" value="GPROTEINBRPT"/>
</dbReference>
<dbReference type="SMART" id="SM00320">
    <property type="entry name" value="WD40"/>
    <property type="match status" value="7"/>
</dbReference>
<dbReference type="SUPFAM" id="SSF50978">
    <property type="entry name" value="WD40 repeat-like"/>
    <property type="match status" value="1"/>
</dbReference>
<dbReference type="PROSITE" id="PS00678">
    <property type="entry name" value="WD_REPEATS_1"/>
    <property type="match status" value="5"/>
</dbReference>
<dbReference type="PROSITE" id="PS50082">
    <property type="entry name" value="WD_REPEATS_2"/>
    <property type="match status" value="5"/>
</dbReference>
<dbReference type="PROSITE" id="PS50294">
    <property type="entry name" value="WD_REPEATS_REGION"/>
    <property type="match status" value="1"/>
</dbReference>
<gene>
    <name type="primary">rack-1</name>
    <name type="ORF">K04D7.1</name>
</gene>
<keyword id="KW-0903">Direct protein sequencing</keyword>
<keyword id="KW-1185">Reference proteome</keyword>
<keyword id="KW-0677">Repeat</keyword>
<keyword id="KW-0687">Ribonucleoprotein</keyword>
<keyword id="KW-0689">Ribosomal protein</keyword>
<keyword id="KW-0853">WD repeat</keyword>
<feature type="initiator methionine" description="Removed" evidence="2">
    <location>
        <position position="1"/>
    </location>
</feature>
<feature type="chain" id="PRO_0000127739" description="Small ribosomal subunit protein RACK1">
    <location>
        <begin position="2"/>
        <end position="325"/>
    </location>
</feature>
<feature type="repeat" description="WD 1">
    <location>
        <begin position="5"/>
        <end position="48"/>
    </location>
</feature>
<feature type="repeat" description="WD 2">
    <location>
        <begin position="58"/>
        <end position="99"/>
    </location>
</feature>
<feature type="repeat" description="WD 3">
    <location>
        <begin position="100"/>
        <end position="141"/>
    </location>
</feature>
<feature type="repeat" description="WD 4">
    <location>
        <begin position="143"/>
        <end position="186"/>
    </location>
</feature>
<feature type="repeat" description="WD 5">
    <location>
        <begin position="187"/>
        <end position="227"/>
    </location>
</feature>
<feature type="repeat" description="WD 6">
    <location>
        <begin position="228"/>
        <end position="268"/>
    </location>
</feature>
<feature type="repeat" description="WD 7">
    <location>
        <begin position="269"/>
        <end position="320"/>
    </location>
</feature>
<evidence type="ECO:0000269" key="1">
    <source>
    </source>
</evidence>
<evidence type="ECO:0000269" key="2">
    <source>
    </source>
</evidence>
<evidence type="ECO:0000305" key="3"/>
<accession>Q21215</accession>
<comment type="function">
    <text evidence="1">Required for the expression of antimicrobial peptide nlp-29 in response to fungal infection or physical injury.</text>
</comment>
<comment type="interaction">
    <interactant intactId="EBI-315497">
        <id>Q21215</id>
    </interactant>
    <interactant intactId="EBI-314833">
        <id>G5EBY5</id>
        <label>sipa-1</label>
    </interactant>
    <organismsDiffer>false</organismsDiffer>
    <experiments>2</experiments>
</comment>
<comment type="interaction">
    <interactant intactId="EBI-315497">
        <id>Q21215</id>
    </interactant>
    <interactant intactId="EBI-4405677">
        <id>Q95QM5</id>
        <label>unc-115</label>
    </interactant>
    <organismsDiffer>false</organismsDiffer>
    <experiments>2</experiments>
</comment>
<comment type="disruption phenotype">
    <text evidence="1">RNAi-mediated knockdown causes a complete loss of nlp-29 expression following fungal infection by D.coniospora and a partial reduction following physical injury.</text>
</comment>
<comment type="similarity">
    <text evidence="3">Belongs to the WD repeat G protein beta family. Ribosomal protein RACK1 subfamily.</text>
</comment>
<organism>
    <name type="scientific">Caenorhabditis elegans</name>
    <dbReference type="NCBI Taxonomy" id="6239"/>
    <lineage>
        <taxon>Eukaryota</taxon>
        <taxon>Metazoa</taxon>
        <taxon>Ecdysozoa</taxon>
        <taxon>Nematoda</taxon>
        <taxon>Chromadorea</taxon>
        <taxon>Rhabditida</taxon>
        <taxon>Rhabditina</taxon>
        <taxon>Rhabditomorpha</taxon>
        <taxon>Rhabditoidea</taxon>
        <taxon>Rhabditidae</taxon>
        <taxon>Peloderinae</taxon>
        <taxon>Caenorhabditis</taxon>
    </lineage>
</organism>
<protein>
    <recommendedName>
        <fullName evidence="3">Small ribosomal subunit protein RACK1</fullName>
    </recommendedName>
    <alternativeName>
        <fullName>Guanine nucleotide-binding protein subunit beta-2-like 1</fullName>
    </alternativeName>
</protein>
<reference key="1">
    <citation type="journal article" date="1998" name="Science">
        <title>Genome sequence of the nematode C. elegans: a platform for investigating biology.</title>
        <authorList>
            <consortium name="The C. elegans sequencing consortium"/>
        </authorList>
    </citation>
    <scope>NUCLEOTIDE SEQUENCE [LARGE SCALE GENOMIC DNA]</scope>
    <source>
        <strain>Bristol N2</strain>
    </source>
</reference>
<reference key="2">
    <citation type="journal article" date="1997" name="Electrophoresis">
        <title>Two-dimensional gel electrophoresis of Caenorhabditis elegans homogenates and identification of protein spots by microsequencing.</title>
        <authorList>
            <person name="Bini L."/>
            <person name="Heid H."/>
            <person name="Liberatori S."/>
            <person name="Geier G."/>
            <person name="Pallini V."/>
            <person name="Zwilling R."/>
        </authorList>
    </citation>
    <scope>PROTEIN SEQUENCE OF 2-14</scope>
    <source>
        <strain>Bristol N2</strain>
    </source>
</reference>
<reference key="3">
    <citation type="journal article" date="2009" name="Cell Host Microbe">
        <title>Antifungal innate immunity in C. elegans: PKCdelta links G protein signaling and a conserved p38 MAPK cascade.</title>
        <authorList>
            <person name="Ziegler K."/>
            <person name="Kurz C.L."/>
            <person name="Cypowyj S."/>
            <person name="Couillault C."/>
            <person name="Pophillat M."/>
            <person name="Pujol N."/>
            <person name="Ewbank J.J."/>
        </authorList>
    </citation>
    <scope>FUNCTION</scope>
    <scope>DISRUPTION PHENOTYPE</scope>
</reference>
<proteinExistence type="evidence at protein level"/>